<name>RTCB_AERPE</name>
<keyword id="KW-0342">GTP-binding</keyword>
<keyword id="KW-0436">Ligase</keyword>
<keyword id="KW-0464">Manganese</keyword>
<keyword id="KW-0479">Metal-binding</keyword>
<keyword id="KW-0547">Nucleotide-binding</keyword>
<keyword id="KW-1185">Reference proteome</keyword>
<keyword id="KW-0819">tRNA processing</keyword>
<reference key="1">
    <citation type="journal article" date="1999" name="DNA Res.">
        <title>Complete genome sequence of an aerobic hyper-thermophilic crenarchaeon, Aeropyrum pernix K1.</title>
        <authorList>
            <person name="Kawarabayasi Y."/>
            <person name="Hino Y."/>
            <person name="Horikawa H."/>
            <person name="Yamazaki S."/>
            <person name="Haikawa Y."/>
            <person name="Jin-no K."/>
            <person name="Takahashi M."/>
            <person name="Sekine M."/>
            <person name="Baba S."/>
            <person name="Ankai A."/>
            <person name="Kosugi H."/>
            <person name="Hosoyama A."/>
            <person name="Fukui S."/>
            <person name="Nagai Y."/>
            <person name="Nishijima K."/>
            <person name="Nakazawa H."/>
            <person name="Takamiya M."/>
            <person name="Masuda S."/>
            <person name="Funahashi T."/>
            <person name="Tanaka T."/>
            <person name="Kudoh Y."/>
            <person name="Yamazaki J."/>
            <person name="Kushida N."/>
            <person name="Oguchi A."/>
            <person name="Aoki K."/>
            <person name="Kubota K."/>
            <person name="Nakamura Y."/>
            <person name="Nomura N."/>
            <person name="Sako Y."/>
            <person name="Kikuchi H."/>
        </authorList>
    </citation>
    <scope>NUCLEOTIDE SEQUENCE [LARGE SCALE GENOMIC DNA]</scope>
    <source>
        <strain>ATCC 700893 / DSM 11879 / JCM 9820 / NBRC 100138 / K1</strain>
    </source>
</reference>
<accession>Q9YB37</accession>
<evidence type="ECO:0000250" key="1">
    <source>
        <dbReference type="UniProtKB" id="O59245"/>
    </source>
</evidence>
<evidence type="ECO:0000305" key="2"/>
<feature type="chain" id="PRO_0000232538" description="tRNA-splicing ligase RtcB">
    <location>
        <begin position="1"/>
        <end position="481"/>
    </location>
</feature>
<feature type="active site" description="GMP-histidine intermediate" evidence="1">
    <location>
        <position position="404"/>
    </location>
</feature>
<feature type="binding site" evidence="1">
    <location>
        <position position="97"/>
    </location>
    <ligand>
        <name>Mn(2+)</name>
        <dbReference type="ChEBI" id="CHEBI:29035"/>
        <label>1</label>
    </ligand>
</feature>
<feature type="binding site" evidence="1">
    <location>
        <position position="100"/>
    </location>
    <ligand>
        <name>Mn(2+)</name>
        <dbReference type="ChEBI" id="CHEBI:29035"/>
        <label>1</label>
    </ligand>
</feature>
<feature type="binding site" evidence="1">
    <location>
        <position position="100"/>
    </location>
    <ligand>
        <name>Mn(2+)</name>
        <dbReference type="ChEBI" id="CHEBI:29035"/>
        <label>2</label>
    </ligand>
</feature>
<feature type="binding site" evidence="1">
    <location>
        <begin position="204"/>
        <end position="208"/>
    </location>
    <ligand>
        <name>GMP</name>
        <dbReference type="ChEBI" id="CHEBI:58115"/>
    </ligand>
</feature>
<feature type="binding site" evidence="1">
    <location>
        <position position="205"/>
    </location>
    <ligand>
        <name>Mn(2+)</name>
        <dbReference type="ChEBI" id="CHEBI:29035"/>
        <label>1</label>
    </ligand>
</feature>
<feature type="binding site" evidence="1">
    <location>
        <position position="236"/>
    </location>
    <ligand>
        <name>Mn(2+)</name>
        <dbReference type="ChEBI" id="CHEBI:29035"/>
        <label>2</label>
    </ligand>
</feature>
<feature type="binding site" evidence="1">
    <location>
        <begin position="330"/>
        <end position="331"/>
    </location>
    <ligand>
        <name>GMP</name>
        <dbReference type="ChEBI" id="CHEBI:58115"/>
    </ligand>
</feature>
<feature type="binding site" evidence="1">
    <location>
        <position position="330"/>
    </location>
    <ligand>
        <name>Mn(2+)</name>
        <dbReference type="ChEBI" id="CHEBI:29035"/>
        <label>2</label>
    </ligand>
</feature>
<feature type="binding site" evidence="1">
    <location>
        <begin position="379"/>
        <end position="382"/>
    </location>
    <ligand>
        <name>GMP</name>
        <dbReference type="ChEBI" id="CHEBI:58115"/>
    </ligand>
</feature>
<feature type="binding site" evidence="1">
    <location>
        <position position="386"/>
    </location>
    <ligand>
        <name>GMP</name>
        <dbReference type="ChEBI" id="CHEBI:58115"/>
    </ligand>
</feature>
<feature type="binding site" evidence="1">
    <location>
        <begin position="404"/>
        <end position="407"/>
    </location>
    <ligand>
        <name>GMP</name>
        <dbReference type="ChEBI" id="CHEBI:58115"/>
    </ligand>
</feature>
<feature type="binding site" evidence="1">
    <location>
        <position position="480"/>
    </location>
    <ligand>
        <name>GMP</name>
        <dbReference type="ChEBI" id="CHEBI:58115"/>
    </ligand>
</feature>
<dbReference type="EC" id="6.5.1.8" evidence="1"/>
<dbReference type="EMBL" id="BA000002">
    <property type="protein sequence ID" value="BAA80761.2"/>
    <property type="molecule type" value="Genomic_DNA"/>
</dbReference>
<dbReference type="PIR" id="D72559">
    <property type="entry name" value="D72559"/>
</dbReference>
<dbReference type="RefSeq" id="WP_010866577.1">
    <property type="nucleotide sequence ID" value="NC_000854.2"/>
</dbReference>
<dbReference type="SMR" id="Q9YB37"/>
<dbReference type="STRING" id="272557.APE_1758.1"/>
<dbReference type="EnsemblBacteria" id="BAA80761">
    <property type="protein sequence ID" value="BAA80761"/>
    <property type="gene ID" value="APE_1758.1"/>
</dbReference>
<dbReference type="GeneID" id="1446222"/>
<dbReference type="KEGG" id="ape:APE_1758.1"/>
<dbReference type="PATRIC" id="fig|272557.25.peg.1182"/>
<dbReference type="eggNOG" id="arCOG04246">
    <property type="taxonomic scope" value="Archaea"/>
</dbReference>
<dbReference type="Proteomes" id="UP000002518">
    <property type="component" value="Chromosome"/>
</dbReference>
<dbReference type="GO" id="GO:0005525">
    <property type="term" value="F:GTP binding"/>
    <property type="evidence" value="ECO:0007669"/>
    <property type="project" value="UniProtKB-KW"/>
</dbReference>
<dbReference type="GO" id="GO:0046872">
    <property type="term" value="F:metal ion binding"/>
    <property type="evidence" value="ECO:0007669"/>
    <property type="project" value="UniProtKB-KW"/>
</dbReference>
<dbReference type="GO" id="GO:0003972">
    <property type="term" value="F:RNA ligase (ATP) activity"/>
    <property type="evidence" value="ECO:0007669"/>
    <property type="project" value="TreeGrafter"/>
</dbReference>
<dbReference type="GO" id="GO:0170057">
    <property type="term" value="F:RNA ligase (GTP) activity"/>
    <property type="evidence" value="ECO:0007669"/>
    <property type="project" value="UniProtKB-EC"/>
</dbReference>
<dbReference type="GO" id="GO:0008033">
    <property type="term" value="P:tRNA processing"/>
    <property type="evidence" value="ECO:0007669"/>
    <property type="project" value="UniProtKB-KW"/>
</dbReference>
<dbReference type="FunFam" id="3.90.1860.10:FF:000001">
    <property type="entry name" value="tRNA-splicing ligase RtcB homolog"/>
    <property type="match status" value="1"/>
</dbReference>
<dbReference type="Gene3D" id="3.90.1860.10">
    <property type="entry name" value="tRNA-splicing ligase RtcB"/>
    <property type="match status" value="1"/>
</dbReference>
<dbReference type="InterPro" id="IPR001233">
    <property type="entry name" value="RtcB"/>
</dbReference>
<dbReference type="InterPro" id="IPR036025">
    <property type="entry name" value="RtcB-like_sf"/>
</dbReference>
<dbReference type="PANTHER" id="PTHR11118">
    <property type="entry name" value="RNA-SPLICING LIGASE RTCB HOMOLOG"/>
    <property type="match status" value="1"/>
</dbReference>
<dbReference type="PANTHER" id="PTHR11118:SF1">
    <property type="entry name" value="RNA-SPLICING LIGASE RTCB HOMOLOG"/>
    <property type="match status" value="1"/>
</dbReference>
<dbReference type="Pfam" id="PF01139">
    <property type="entry name" value="RtcB"/>
    <property type="match status" value="1"/>
</dbReference>
<dbReference type="SUPFAM" id="SSF103365">
    <property type="entry name" value="Hypothetical protein PH1602"/>
    <property type="match status" value="1"/>
</dbReference>
<organism>
    <name type="scientific">Aeropyrum pernix (strain ATCC 700893 / DSM 11879 / JCM 9820 / NBRC 100138 / K1)</name>
    <dbReference type="NCBI Taxonomy" id="272557"/>
    <lineage>
        <taxon>Archaea</taxon>
        <taxon>Thermoproteota</taxon>
        <taxon>Thermoprotei</taxon>
        <taxon>Desulfurococcales</taxon>
        <taxon>Desulfurococcaceae</taxon>
        <taxon>Aeropyrum</taxon>
    </lineage>
</organism>
<gene>
    <name type="primary">rtcB</name>
    <name type="ordered locus">APE_1758.1</name>
</gene>
<comment type="function">
    <text evidence="1">Essential for tRNA splicing and maturation. Acts by directly joining spliced tRNA halves to mature-sized tRNAs. Joins RNA with 2',3'-cyclic-phosphate or 3'-phosphate ends to RNA with 5'-hydroxy ends.</text>
</comment>
<comment type="catalytic activity">
    <reaction evidence="1">
        <text>a 3'-end 3'-phospho-ribonucleotide-RNA + a 5'-end dephospho-ribonucleoside-RNA + GTP = a ribonucleotidyl-ribonucleotide-RNA + GMP + diphosphate</text>
        <dbReference type="Rhea" id="RHEA:68076"/>
        <dbReference type="Rhea" id="RHEA-COMP:10463"/>
        <dbReference type="Rhea" id="RHEA-COMP:13936"/>
        <dbReference type="Rhea" id="RHEA-COMP:17355"/>
        <dbReference type="ChEBI" id="CHEBI:33019"/>
        <dbReference type="ChEBI" id="CHEBI:37565"/>
        <dbReference type="ChEBI" id="CHEBI:58115"/>
        <dbReference type="ChEBI" id="CHEBI:83062"/>
        <dbReference type="ChEBI" id="CHEBI:138284"/>
        <dbReference type="ChEBI" id="CHEBI:173118"/>
        <dbReference type="EC" id="6.5.1.8"/>
    </reaction>
</comment>
<comment type="catalytic activity">
    <reaction evidence="1">
        <text>a 3'-end 2',3'-cyclophospho-ribonucleotide-RNA + a 5'-end dephospho-ribonucleoside-RNA + GTP + H2O = a ribonucleotidyl-ribonucleotide-RNA + GMP + diphosphate + H(+)</text>
        <dbReference type="Rhea" id="RHEA:68080"/>
        <dbReference type="Rhea" id="RHEA-COMP:10464"/>
        <dbReference type="Rhea" id="RHEA-COMP:13936"/>
        <dbReference type="Rhea" id="RHEA-COMP:17355"/>
        <dbReference type="ChEBI" id="CHEBI:15377"/>
        <dbReference type="ChEBI" id="CHEBI:15378"/>
        <dbReference type="ChEBI" id="CHEBI:33019"/>
        <dbReference type="ChEBI" id="CHEBI:37565"/>
        <dbReference type="ChEBI" id="CHEBI:58115"/>
        <dbReference type="ChEBI" id="CHEBI:83064"/>
        <dbReference type="ChEBI" id="CHEBI:138284"/>
        <dbReference type="ChEBI" id="CHEBI:173118"/>
        <dbReference type="EC" id="6.5.1.8"/>
    </reaction>
</comment>
<comment type="cofactor">
    <cofactor evidence="1">
        <name>Mn(2+)</name>
        <dbReference type="ChEBI" id="CHEBI:29035"/>
    </cofactor>
    <text evidence="1">Binds 2 manganese ions per subunit.</text>
</comment>
<comment type="subunit">
    <text evidence="1">Monomer.</text>
</comment>
<comment type="miscellaneous">
    <text evidence="1">Ligation proceeds through 3 nucleotidyl transfer steps, with 2',3'-cyclic phosphate termini being hydrolyzed to 3'-P termini in a step that precedes 3'-P activation with GMP. In the first nucleotidyl transfer step, RtcB reacts with GTP to form a covalent RtcB-histidine-GMP intermediate with release of PPi; in the second step, the GMP moiety is transferred to the RNA 3'-P; in the third step, the 5'-OH from the opposite RNA strand attacks the activated 3'-P to form a 3',5'-phosphodiester bond and release GMP.</text>
</comment>
<comment type="similarity">
    <text evidence="2">Belongs to the RtcB family.</text>
</comment>
<protein>
    <recommendedName>
        <fullName evidence="1">tRNA-splicing ligase RtcB</fullName>
        <ecNumber evidence="1">6.5.1.8</ecNumber>
    </recommendedName>
    <alternativeName>
        <fullName evidence="1">3'-phosphate/5'-hydroxy nucleic acid ligase</fullName>
    </alternativeName>
</protein>
<proteinExistence type="inferred from homology"/>
<sequence length="481" mass="53474">MLPTRRIDKYVWMIPQDAKPCMRVPAIVYADDFLIEKMKQDKTLLQAANVACLQGIQKYSIVMPDGHQGYGFPIGGVAAMDIEEENGVISPGGVGYDINCGVRVLRTNLTEEEVRPKLKDLVDTLYHNVPSGLGSTGKVKLSVQELDKVLDTGVEWAISRGYGWPEDKEHIEERGSWSLADSSKVSQTAKRRGAEQLGTLGSGNHFLEVQVVERVFDERIAKAYGLFEGQVVVMIHTGSRGLGHQVASDYLMIMERAMRKYGTIPPDRELASIPYNSPEAQNYVRAMAAAANFAWTNRQMITHWTRESFKKVFHQDPDKLGLEIVYDVAHNIAKIEEYEVDGKRKKLVIHRKGATRAFPPGHPEIPKDYMDVGQPVLIPGSMGTGSYILAGVPEGVKSWYTAPHGAGRWMSRSRAKRTKTFNQVLEELAAKGIYIRASNRATVVEEMPEAYKDVDRVAQVAHAVGIGRLVARMRPIGVTKG</sequence>